<name>NP1L1_RAT</name>
<dbReference type="EMBL" id="AF062594">
    <property type="protein sequence ID" value="AAC67388.1"/>
    <property type="molecule type" value="mRNA"/>
</dbReference>
<dbReference type="RefSeq" id="NP_446013.2">
    <property type="nucleotide sequence ID" value="NM_053561.2"/>
</dbReference>
<dbReference type="BioGRID" id="250147">
    <property type="interactions" value="4"/>
</dbReference>
<dbReference type="FunCoup" id="Q9Z2G8">
    <property type="interactions" value="3573"/>
</dbReference>
<dbReference type="IntAct" id="Q9Z2G8">
    <property type="interactions" value="1"/>
</dbReference>
<dbReference type="STRING" id="10116.ENSRNOP00000005286"/>
<dbReference type="iPTMnet" id="Q9Z2G8"/>
<dbReference type="PhosphoSitePlus" id="Q9Z2G8"/>
<dbReference type="SwissPalm" id="Q9Z2G8"/>
<dbReference type="jPOST" id="Q9Z2G8"/>
<dbReference type="PaxDb" id="10116-ENSRNOP00000005286"/>
<dbReference type="PeptideAtlas" id="Q9Z2G8"/>
<dbReference type="GeneID" id="89825"/>
<dbReference type="KEGG" id="rno:89825"/>
<dbReference type="UCSC" id="RGD:71094">
    <property type="organism name" value="rat"/>
</dbReference>
<dbReference type="AGR" id="RGD:71094"/>
<dbReference type="CTD" id="4673"/>
<dbReference type="RGD" id="71094">
    <property type="gene designation" value="Nap1l1"/>
</dbReference>
<dbReference type="eggNOG" id="KOG1507">
    <property type="taxonomic scope" value="Eukaryota"/>
</dbReference>
<dbReference type="InParanoid" id="Q9Z2G8"/>
<dbReference type="OrthoDB" id="27325at2759"/>
<dbReference type="PhylomeDB" id="Q9Z2G8"/>
<dbReference type="PRO" id="PR:Q9Z2G8"/>
<dbReference type="Proteomes" id="UP000002494">
    <property type="component" value="Unplaced"/>
</dbReference>
<dbReference type="GO" id="GO:0000785">
    <property type="term" value="C:chromatin"/>
    <property type="evidence" value="ECO:0000318"/>
    <property type="project" value="GO_Central"/>
</dbReference>
<dbReference type="GO" id="GO:0005737">
    <property type="term" value="C:cytoplasm"/>
    <property type="evidence" value="ECO:0000266"/>
    <property type="project" value="RGD"/>
</dbReference>
<dbReference type="GO" id="GO:0042470">
    <property type="term" value="C:melanosome"/>
    <property type="evidence" value="ECO:0007669"/>
    <property type="project" value="UniProtKB-SubCell"/>
</dbReference>
<dbReference type="GO" id="GO:0005634">
    <property type="term" value="C:nucleus"/>
    <property type="evidence" value="ECO:0000250"/>
    <property type="project" value="UniProtKB"/>
</dbReference>
<dbReference type="GO" id="GO:0003682">
    <property type="term" value="F:chromatin binding"/>
    <property type="evidence" value="ECO:0000318"/>
    <property type="project" value="GO_Central"/>
</dbReference>
<dbReference type="GO" id="GO:0042393">
    <property type="term" value="F:histone binding"/>
    <property type="evidence" value="ECO:0000318"/>
    <property type="project" value="GO_Central"/>
</dbReference>
<dbReference type="GO" id="GO:0140713">
    <property type="term" value="F:histone chaperone activity"/>
    <property type="evidence" value="ECO:0000266"/>
    <property type="project" value="RGD"/>
</dbReference>
<dbReference type="GO" id="GO:0019900">
    <property type="term" value="F:kinase binding"/>
    <property type="evidence" value="ECO:0000353"/>
    <property type="project" value="RGD"/>
</dbReference>
<dbReference type="GO" id="GO:0071375">
    <property type="term" value="P:cellular response to peptide hormone stimulus"/>
    <property type="evidence" value="ECO:0000270"/>
    <property type="project" value="RGD"/>
</dbReference>
<dbReference type="GO" id="GO:0006334">
    <property type="term" value="P:nucleosome assembly"/>
    <property type="evidence" value="ECO:0000318"/>
    <property type="project" value="GO_Central"/>
</dbReference>
<dbReference type="GO" id="GO:2000179">
    <property type="term" value="P:positive regulation of neural precursor cell proliferation"/>
    <property type="evidence" value="ECO:0000250"/>
    <property type="project" value="UniProtKB"/>
</dbReference>
<dbReference type="GO" id="GO:0050769">
    <property type="term" value="P:positive regulation of neurogenesis"/>
    <property type="evidence" value="ECO:0000250"/>
    <property type="project" value="UniProtKB"/>
</dbReference>
<dbReference type="GO" id="GO:0014010">
    <property type="term" value="P:Schwann cell proliferation"/>
    <property type="evidence" value="ECO:0000270"/>
    <property type="project" value="RGD"/>
</dbReference>
<dbReference type="FunFam" id="1.20.5.1500:FF:000001">
    <property type="entry name" value="Nucleosome assembly protein 1-like 1"/>
    <property type="match status" value="1"/>
</dbReference>
<dbReference type="FunFam" id="3.30.1120.90:FF:000001">
    <property type="entry name" value="Nucleosome assembly protein 1-like 1"/>
    <property type="match status" value="1"/>
</dbReference>
<dbReference type="Gene3D" id="1.20.5.1500">
    <property type="match status" value="1"/>
</dbReference>
<dbReference type="Gene3D" id="3.30.1120.90">
    <property type="entry name" value="Nucleosome assembly protein"/>
    <property type="match status" value="1"/>
</dbReference>
<dbReference type="InterPro" id="IPR037231">
    <property type="entry name" value="NAP-like_sf"/>
</dbReference>
<dbReference type="InterPro" id="IPR002164">
    <property type="entry name" value="NAP_family"/>
</dbReference>
<dbReference type="PANTHER" id="PTHR11875">
    <property type="entry name" value="TESTIS-SPECIFIC Y-ENCODED PROTEIN"/>
    <property type="match status" value="1"/>
</dbReference>
<dbReference type="Pfam" id="PF00956">
    <property type="entry name" value="NAP"/>
    <property type="match status" value="1"/>
</dbReference>
<dbReference type="SUPFAM" id="SSF143113">
    <property type="entry name" value="NAP-like"/>
    <property type="match status" value="1"/>
</dbReference>
<comment type="function">
    <text evidence="1 2">Histone chaperone that plays a role in the nuclear import of H2A-H2B and nucleosome assembly. Also participates in several important DNA repair mechanisms: greatly enhances ERCC6-mediated chromatin remodeling which is essential for transcription-coupled nucleotide excision DNA repair. Also stimulates homologous recombination (HR) by RAD51 and RAD54 which is essential in mitotic DNA double strand break (DSB) repair (By similarity). Plays a key role in the regulation of embryonic neurogenesis (By similarity). Promotes the proliferation of neural progenitors and inhibits neuronal differentiation during cortical development (By similarity). Regulates neurogenesis via the modulation of RASSF10; regulates RASSF10 expression by promoting SETD1A-mediated H3K4 methylation at the RASSF10 promoter (By similarity).</text>
</comment>
<comment type="subunit">
    <text evidence="1 2">Homodimer. The dimer binds strongly and sequentially to single and double H2A-H2B heterodimers. Interacts with ERCC6; this interaction increases ERCC6 processivity. Interacts with RAD54 (By similarity). Interacts with SETD1A (By similarity).</text>
</comment>
<comment type="subcellular location">
    <subcellularLocation>
        <location evidence="1">Nucleus</location>
    </subcellularLocation>
    <subcellularLocation>
        <location evidence="2">Melanosome</location>
    </subcellularLocation>
    <subcellularLocation>
        <location evidence="1">Cytoplasm</location>
    </subcellularLocation>
</comment>
<comment type="domain">
    <text evidence="2">The NAP1L motif is required for the histone chaperone activity.</text>
</comment>
<comment type="domain">
    <text evidence="2">The acidic domains are probably involved in the interaction with histones.</text>
</comment>
<comment type="PTM">
    <text evidence="1">Polyglycylated by TTLL10 on glutamate residues, resulting in polyglycine chains on the gamma-carboxyl group. Both polyglutamylation and polyglycylation modifications can coexist on the same protein on adjacent residues, and lowering polyglycylation levels increases polyglutamylation, and reciprocally.</text>
</comment>
<comment type="PTM">
    <text evidence="1">Polyglutamylated by TTLL4 on glutamate residues, resulting in polyglutamate chains on the gamma-carboxyl group. Both polyglutamylation and polyglycylation modifications can coexist on the same protein on adjacent residues, and lowering polyglycylation levels increases polyglutamylation, and reciprocally.</text>
</comment>
<comment type="similarity">
    <text evidence="5">Belongs to the nucleosome assembly protein (NAP) family.</text>
</comment>
<sequence length="390" mass="45314">MADIDNKEQSELDQDLEDVEEVEEEETGEETKIKARQLTVQMMQNPQILAALQERLDGLVDTPTGYIESLPKVVKRRVNALKNLQVKCAQIEAKFYEEVHDLERKYAVLYQPLFDKRFEIINAIYEPTEEECEWKPDEEDEVSEELKEKAKIEDEKKDEEKEDPKGIPEFWLTVFKNDLLSDMVQEHDEPILKHLKDIKVKFSDAGQPMSFILEFHFEPNEYFTNEVLTKTYRMRSEPDDSDPFSFDGPEIMGCTGCQIDWKKGKNVTLKTIKKKQKHKGRGTVRTVTKTVSKTSFFNFFAPPEVPENGDLDDDXEAILAADFEIGHFLRERIIPRSVLYFTGEAIEDDDDDYDEEGEEADEEGEEEGDEENDPDYDPKKDQNPAECKQQ</sequence>
<keyword id="KW-0007">Acetylation</keyword>
<keyword id="KW-0963">Cytoplasm</keyword>
<keyword id="KW-1017">Isopeptide bond</keyword>
<keyword id="KW-0449">Lipoprotein</keyword>
<keyword id="KW-0488">Methylation</keyword>
<keyword id="KW-0524">Neurogenesis</keyword>
<keyword id="KW-0539">Nucleus</keyword>
<keyword id="KW-0597">Phosphoprotein</keyword>
<keyword id="KW-0636">Prenylation</keyword>
<keyword id="KW-1185">Reference proteome</keyword>
<proteinExistence type="evidence at protein level"/>
<feature type="initiator methionine" description="Removed" evidence="2">
    <location>
        <position position="1"/>
    </location>
</feature>
<feature type="chain" id="PRO_0000185654" description="Nucleosome assembly protein 1-like 1">
    <location>
        <begin position="2"/>
        <end position="387"/>
    </location>
</feature>
<feature type="propeptide" id="PRO_0000396688" description="Removed in mature form" evidence="2">
    <location>
        <begin position="388"/>
        <end position="390"/>
    </location>
</feature>
<feature type="region of interest" description="Disordered" evidence="4">
    <location>
        <begin position="1"/>
        <end position="32"/>
    </location>
</feature>
<feature type="region of interest" description="Disordered" evidence="4">
    <location>
        <begin position="131"/>
        <end position="163"/>
    </location>
</feature>
<feature type="region of interest" description="Disordered" evidence="4">
    <location>
        <begin position="345"/>
        <end position="390"/>
    </location>
</feature>
<feature type="short sequence motif" description="NAP1L motif" evidence="2">
    <location>
        <begin position="125"/>
        <end position="150"/>
    </location>
</feature>
<feature type="short sequence motif" description="Nuclear localization signal" evidence="3">
    <location>
        <begin position="272"/>
        <end position="278"/>
    </location>
</feature>
<feature type="compositionally biased region" description="Basic and acidic residues" evidence="4">
    <location>
        <begin position="1"/>
        <end position="10"/>
    </location>
</feature>
<feature type="compositionally biased region" description="Acidic residues" evidence="4">
    <location>
        <begin position="11"/>
        <end position="28"/>
    </location>
</feature>
<feature type="compositionally biased region" description="Acidic residues" evidence="4">
    <location>
        <begin position="131"/>
        <end position="143"/>
    </location>
</feature>
<feature type="compositionally biased region" description="Basic and acidic residues" evidence="4">
    <location>
        <begin position="144"/>
        <end position="163"/>
    </location>
</feature>
<feature type="compositionally biased region" description="Acidic residues" evidence="4">
    <location>
        <begin position="345"/>
        <end position="375"/>
    </location>
</feature>
<feature type="compositionally biased region" description="Basic and acidic residues" evidence="4">
    <location>
        <begin position="376"/>
        <end position="390"/>
    </location>
</feature>
<feature type="modified residue" description="N-acetylalanine" evidence="2">
    <location>
        <position position="2"/>
    </location>
</feature>
<feature type="modified residue" description="Phosphoserine" evidence="6">
    <location>
        <position position="10"/>
    </location>
</feature>
<feature type="modified residue" description="Phosphothreonine" evidence="6">
    <location>
        <position position="62"/>
    </location>
</feature>
<feature type="modified residue" description="Phosphothreonine" evidence="1">
    <location>
        <position position="64"/>
    </location>
</feature>
<feature type="modified residue" description="Phosphoserine" evidence="2">
    <location>
        <position position="69"/>
    </location>
</feature>
<feature type="modified residue" description="N6-acetyllysine" evidence="2">
    <location>
        <position position="116"/>
    </location>
</feature>
<feature type="modified residue" description="Phosphoserine" evidence="2">
    <location>
        <position position="143"/>
    </location>
</feature>
<feature type="modified residue" description="5-glutamyl polyglycine" evidence="1">
    <location>
        <position position="358"/>
    </location>
</feature>
<feature type="modified residue" description="5-glutamyl polyglycine" evidence="1">
    <location>
        <position position="359"/>
    </location>
</feature>
<feature type="modified residue" description="Cysteine methyl ester" evidence="5">
    <location>
        <position position="387"/>
    </location>
</feature>
<feature type="lipid moiety-binding region" description="S-farnesyl cysteine" evidence="2">
    <location>
        <position position="387"/>
    </location>
</feature>
<gene>
    <name type="primary">Nap1l1</name>
    <name type="synonym">Nrp</name>
</gene>
<evidence type="ECO:0000250" key="1">
    <source>
        <dbReference type="UniProtKB" id="P28656"/>
    </source>
</evidence>
<evidence type="ECO:0000250" key="2">
    <source>
        <dbReference type="UniProtKB" id="P55209"/>
    </source>
</evidence>
<evidence type="ECO:0000255" key="3"/>
<evidence type="ECO:0000256" key="4">
    <source>
        <dbReference type="SAM" id="MobiDB-lite"/>
    </source>
</evidence>
<evidence type="ECO:0000305" key="5"/>
<evidence type="ECO:0007744" key="6">
    <source>
    </source>
</evidence>
<organism>
    <name type="scientific">Rattus norvegicus</name>
    <name type="common">Rat</name>
    <dbReference type="NCBI Taxonomy" id="10116"/>
    <lineage>
        <taxon>Eukaryota</taxon>
        <taxon>Metazoa</taxon>
        <taxon>Chordata</taxon>
        <taxon>Craniata</taxon>
        <taxon>Vertebrata</taxon>
        <taxon>Euteleostomi</taxon>
        <taxon>Mammalia</taxon>
        <taxon>Eutheria</taxon>
        <taxon>Euarchontoglires</taxon>
        <taxon>Glires</taxon>
        <taxon>Rodentia</taxon>
        <taxon>Myomorpha</taxon>
        <taxon>Muroidea</taxon>
        <taxon>Muridae</taxon>
        <taxon>Murinae</taxon>
        <taxon>Rattus</taxon>
    </lineage>
</organism>
<reference key="1">
    <citation type="submission" date="1998-04" db="EMBL/GenBank/DDBJ databases">
        <title>Mpl-ligand stimulates the expression of multiple mRNAs encoding a family of nucleosome assembly proteins.</title>
        <authorList>
            <person name="Cataldo L.M."/>
            <person name="Zhang Y."/>
            <person name="Ravid K."/>
        </authorList>
    </citation>
    <scope>NUCLEOTIDE SEQUENCE [MRNA]</scope>
    <source>
        <strain>Sprague-Dawley</strain>
    </source>
</reference>
<reference key="2">
    <citation type="journal article" date="2012" name="Nat. Commun.">
        <title>Quantitative maps of protein phosphorylation sites across 14 different rat organs and tissues.</title>
        <authorList>
            <person name="Lundby A."/>
            <person name="Secher A."/>
            <person name="Lage K."/>
            <person name="Nordsborg N.B."/>
            <person name="Dmytriyev A."/>
            <person name="Lundby C."/>
            <person name="Olsen J.V."/>
        </authorList>
    </citation>
    <scope>PHOSPHORYLATION [LARGE SCALE ANALYSIS] AT SER-10 AND THR-62</scope>
    <scope>IDENTIFICATION BY MASS SPECTROMETRY [LARGE SCALE ANALYSIS]</scope>
</reference>
<protein>
    <recommendedName>
        <fullName>Nucleosome assembly protein 1-like 1</fullName>
    </recommendedName>
    <alternativeName>
        <fullName>NAP-1-related protein</fullName>
    </alternativeName>
</protein>
<accession>Q9Z2G8</accession>